<sequence>MTLAVMLQGTASDVGKSVLVAGLCRIFHQDGLRTAPFKSQNMALNSGITPDGKEMGRAQIFQAEAAGIAPDVRMNPILLKPTSDRQAQVVLMGQVATSMDAVSYHQYKPRLREQILAVYQSLAGEYEALVLEGAGSPAEINLRDRDIVNMGMAEMAQCPVILVADIDRGGVFAAIYGTLALLQPQERARVKGVIINKFRGDVALLRSGIEQIEALTGVPVLGVMPWLDVDLEDEDGVALQAGKYHRTDRRDIDIAVVHLPHIANFTDFNALAAQPDVRVRYVRDPQALADADLVILPGSKNTLGDLCWLRESGMAHAVEQARQRKVPLLGICGGYQMLGETIIDEVESGLGTQPGLGVLKTVTHFAQHKTTTQVQATLGTNLPEWLADAAGLHVSGYEIHMGETRREAGSPPLLQLHKAGQSVEDGAISDDGLAFGTYLHGLFDSDAFTRALLNGLRQRKGLAPLDSALEYARYKTRQFDRLADAMREHIAIDKIYAIMRQHQEPLC</sequence>
<gene>
    <name evidence="1" type="primary">cobQ</name>
    <name type="ordered locus">KPK_0932</name>
</gene>
<evidence type="ECO:0000255" key="1">
    <source>
        <dbReference type="HAMAP-Rule" id="MF_00028"/>
    </source>
</evidence>
<accession>B5XUV5</accession>
<feature type="chain" id="PRO_1000090230" description="Cobyric acid synthase">
    <location>
        <begin position="1"/>
        <end position="507"/>
    </location>
</feature>
<feature type="domain" description="GATase cobBQ-type" evidence="1">
    <location>
        <begin position="251"/>
        <end position="448"/>
    </location>
</feature>
<feature type="active site" description="Nucleophile" evidence="1">
    <location>
        <position position="332"/>
    </location>
</feature>
<feature type="active site" evidence="1">
    <location>
        <position position="440"/>
    </location>
</feature>
<proteinExistence type="inferred from homology"/>
<organism>
    <name type="scientific">Klebsiella pneumoniae (strain 342)</name>
    <dbReference type="NCBI Taxonomy" id="507522"/>
    <lineage>
        <taxon>Bacteria</taxon>
        <taxon>Pseudomonadati</taxon>
        <taxon>Pseudomonadota</taxon>
        <taxon>Gammaproteobacteria</taxon>
        <taxon>Enterobacterales</taxon>
        <taxon>Enterobacteriaceae</taxon>
        <taxon>Klebsiella/Raoultella group</taxon>
        <taxon>Klebsiella</taxon>
        <taxon>Klebsiella pneumoniae complex</taxon>
    </lineage>
</organism>
<comment type="function">
    <text evidence="1">Catalyzes amidations at positions B, D, E, and G on adenosylcobyrinic A,C-diamide. NH(2) groups are provided by glutamine, and one molecule of ATP is hydrogenolyzed for each amidation.</text>
</comment>
<comment type="pathway">
    <text evidence="1">Cofactor biosynthesis; adenosylcobalamin biosynthesis.</text>
</comment>
<comment type="similarity">
    <text evidence="1">Belongs to the CobB/CobQ family. CobQ subfamily.</text>
</comment>
<reference key="1">
    <citation type="journal article" date="2008" name="PLoS Genet.">
        <title>Complete genome sequence of the N2-fixing broad host range endophyte Klebsiella pneumoniae 342 and virulence predictions verified in mice.</title>
        <authorList>
            <person name="Fouts D.E."/>
            <person name="Tyler H.L."/>
            <person name="DeBoy R.T."/>
            <person name="Daugherty S."/>
            <person name="Ren Q."/>
            <person name="Badger J.H."/>
            <person name="Durkin A.S."/>
            <person name="Huot H."/>
            <person name="Shrivastava S."/>
            <person name="Kothari S."/>
            <person name="Dodson R.J."/>
            <person name="Mohamoud Y."/>
            <person name="Khouri H."/>
            <person name="Roesch L.F.W."/>
            <person name="Krogfelt K.A."/>
            <person name="Struve C."/>
            <person name="Triplett E.W."/>
            <person name="Methe B.A."/>
        </authorList>
    </citation>
    <scope>NUCLEOTIDE SEQUENCE [LARGE SCALE GENOMIC DNA]</scope>
    <source>
        <strain>342</strain>
    </source>
</reference>
<dbReference type="EMBL" id="CP000964">
    <property type="protein sequence ID" value="ACI06774.1"/>
    <property type="molecule type" value="Genomic_DNA"/>
</dbReference>
<dbReference type="SMR" id="B5XUV5"/>
<dbReference type="KEGG" id="kpe:KPK_0932"/>
<dbReference type="HOGENOM" id="CLU_019250_2_2_6"/>
<dbReference type="UniPathway" id="UPA00148"/>
<dbReference type="Proteomes" id="UP000001734">
    <property type="component" value="Chromosome"/>
</dbReference>
<dbReference type="GO" id="GO:0015420">
    <property type="term" value="F:ABC-type vitamin B12 transporter activity"/>
    <property type="evidence" value="ECO:0007669"/>
    <property type="project" value="UniProtKB-UniRule"/>
</dbReference>
<dbReference type="GO" id="GO:0003824">
    <property type="term" value="F:catalytic activity"/>
    <property type="evidence" value="ECO:0007669"/>
    <property type="project" value="InterPro"/>
</dbReference>
<dbReference type="GO" id="GO:0009236">
    <property type="term" value="P:cobalamin biosynthetic process"/>
    <property type="evidence" value="ECO:0007669"/>
    <property type="project" value="UniProtKB-UniRule"/>
</dbReference>
<dbReference type="CDD" id="cd05389">
    <property type="entry name" value="CobQ_N"/>
    <property type="match status" value="1"/>
</dbReference>
<dbReference type="CDD" id="cd01750">
    <property type="entry name" value="GATase1_CobQ"/>
    <property type="match status" value="1"/>
</dbReference>
<dbReference type="Gene3D" id="3.40.50.880">
    <property type="match status" value="1"/>
</dbReference>
<dbReference type="Gene3D" id="3.40.50.300">
    <property type="entry name" value="P-loop containing nucleotide triphosphate hydrolases"/>
    <property type="match status" value="1"/>
</dbReference>
<dbReference type="HAMAP" id="MF_00028">
    <property type="entry name" value="CobQ"/>
    <property type="match status" value="1"/>
</dbReference>
<dbReference type="InterPro" id="IPR029062">
    <property type="entry name" value="Class_I_gatase-like"/>
</dbReference>
<dbReference type="InterPro" id="IPR002586">
    <property type="entry name" value="CobQ/CobB/MinD/ParA_Nub-bd_dom"/>
</dbReference>
<dbReference type="InterPro" id="IPR033949">
    <property type="entry name" value="CobQ_GATase1"/>
</dbReference>
<dbReference type="InterPro" id="IPR047045">
    <property type="entry name" value="CobQ_N"/>
</dbReference>
<dbReference type="InterPro" id="IPR004459">
    <property type="entry name" value="CobQ_synth"/>
</dbReference>
<dbReference type="InterPro" id="IPR011698">
    <property type="entry name" value="GATase_3"/>
</dbReference>
<dbReference type="InterPro" id="IPR027417">
    <property type="entry name" value="P-loop_NTPase"/>
</dbReference>
<dbReference type="NCBIfam" id="TIGR00313">
    <property type="entry name" value="cobQ"/>
    <property type="match status" value="1"/>
</dbReference>
<dbReference type="NCBIfam" id="NF001989">
    <property type="entry name" value="PRK00784.1"/>
    <property type="match status" value="1"/>
</dbReference>
<dbReference type="PANTHER" id="PTHR21343:SF1">
    <property type="entry name" value="COBYRIC ACID SYNTHASE"/>
    <property type="match status" value="1"/>
</dbReference>
<dbReference type="PANTHER" id="PTHR21343">
    <property type="entry name" value="DETHIOBIOTIN SYNTHETASE"/>
    <property type="match status" value="1"/>
</dbReference>
<dbReference type="Pfam" id="PF01656">
    <property type="entry name" value="CbiA"/>
    <property type="match status" value="1"/>
</dbReference>
<dbReference type="Pfam" id="PF07685">
    <property type="entry name" value="GATase_3"/>
    <property type="match status" value="1"/>
</dbReference>
<dbReference type="SUPFAM" id="SSF52317">
    <property type="entry name" value="Class I glutamine amidotransferase-like"/>
    <property type="match status" value="1"/>
</dbReference>
<dbReference type="SUPFAM" id="SSF52540">
    <property type="entry name" value="P-loop containing nucleoside triphosphate hydrolases"/>
    <property type="match status" value="1"/>
</dbReference>
<dbReference type="PROSITE" id="PS51274">
    <property type="entry name" value="GATASE_COBBQ"/>
    <property type="match status" value="1"/>
</dbReference>
<protein>
    <recommendedName>
        <fullName evidence="1">Cobyric acid synthase</fullName>
    </recommendedName>
</protein>
<name>COBQ_KLEP3</name>
<keyword id="KW-0169">Cobalamin biosynthesis</keyword>
<keyword id="KW-0315">Glutamine amidotransferase</keyword>